<sequence length="518" mass="58053">MFKIMKDFTEQEKIIVLDFGSQYNQLITRRIREFGVYSELHPHTITVEEMKALNPTGIIFSGGPNSVYDKDAFRADERIFDMGIPILGICYGMQLMTTHFDGKVERAKDREYGKADIHVENPSRLFAGLPTDQVVWMSHGDLVVEEPAGFEVTATSPSCPIAGIADEERLLYGVQFHPEVRHSVYGNELLKNFALNVCGCKGDWTMENFSEVEIAKIQEIVGDKKVLLALSGGVDSSVVGVLIHKAIGDQLTCIFVDHGLLRKGEADQVMATLQGEFNMNIIKVDAKKRFMDKLAGVSDPEQKRKIIGNEFIYVFDDEANKLDGVEFLAQGTLYTDIIESGTATAQTIKSHHNVGGLPEDMQFKLIEPLNTLFKDEVRALGTELGMPDAIVWRQPFPGPGLGIRVLGEITEEKLEIVRDSDYILREEIKKAGLEREIWQYFTALPNIRSVGVMGDGRTYDHTVVVRAVTSIDGMTADWARIPWDVLEKISVRIVNEVDHVNRVVYDITSKPPATVEWE</sequence>
<comment type="function">
    <text evidence="1">Catalyzes the synthesis of GMP from XMP.</text>
</comment>
<comment type="catalytic activity">
    <reaction evidence="1">
        <text>XMP + L-glutamine + ATP + H2O = GMP + L-glutamate + AMP + diphosphate + 2 H(+)</text>
        <dbReference type="Rhea" id="RHEA:11680"/>
        <dbReference type="ChEBI" id="CHEBI:15377"/>
        <dbReference type="ChEBI" id="CHEBI:15378"/>
        <dbReference type="ChEBI" id="CHEBI:29985"/>
        <dbReference type="ChEBI" id="CHEBI:30616"/>
        <dbReference type="ChEBI" id="CHEBI:33019"/>
        <dbReference type="ChEBI" id="CHEBI:57464"/>
        <dbReference type="ChEBI" id="CHEBI:58115"/>
        <dbReference type="ChEBI" id="CHEBI:58359"/>
        <dbReference type="ChEBI" id="CHEBI:456215"/>
        <dbReference type="EC" id="6.3.5.2"/>
    </reaction>
</comment>
<comment type="pathway">
    <text evidence="1">Purine metabolism; GMP biosynthesis; GMP from XMP (L-Gln route): step 1/1.</text>
</comment>
<comment type="subunit">
    <text evidence="1">Homodimer.</text>
</comment>
<feature type="chain" id="PRO_1000120332" description="GMP synthase [glutamine-hydrolyzing]">
    <location>
        <begin position="1"/>
        <end position="518"/>
    </location>
</feature>
<feature type="domain" description="Glutamine amidotransferase type-1" evidence="1">
    <location>
        <begin position="13"/>
        <end position="203"/>
    </location>
</feature>
<feature type="domain" description="GMPS ATP-PPase" evidence="1">
    <location>
        <begin position="204"/>
        <end position="393"/>
    </location>
</feature>
<feature type="active site" description="Nucleophile" evidence="1">
    <location>
        <position position="90"/>
    </location>
</feature>
<feature type="active site" evidence="1">
    <location>
        <position position="177"/>
    </location>
</feature>
<feature type="active site" evidence="1">
    <location>
        <position position="179"/>
    </location>
</feature>
<feature type="binding site" evidence="1">
    <location>
        <begin position="231"/>
        <end position="237"/>
    </location>
    <ligand>
        <name>ATP</name>
        <dbReference type="ChEBI" id="CHEBI:30616"/>
    </ligand>
</feature>
<dbReference type="EC" id="6.3.5.2" evidence="1"/>
<dbReference type="EMBL" id="AM263198">
    <property type="protein sequence ID" value="CAK20489.1"/>
    <property type="molecule type" value="Genomic_DNA"/>
</dbReference>
<dbReference type="RefSeq" id="WP_011701892.1">
    <property type="nucleotide sequence ID" value="NC_008555.1"/>
</dbReference>
<dbReference type="SMR" id="A0AHK7"/>
<dbReference type="STRING" id="386043.lwe1071"/>
<dbReference type="MEROPS" id="C26.957"/>
<dbReference type="GeneID" id="61188958"/>
<dbReference type="KEGG" id="lwe:lwe1071"/>
<dbReference type="eggNOG" id="COG0518">
    <property type="taxonomic scope" value="Bacteria"/>
</dbReference>
<dbReference type="eggNOG" id="COG0519">
    <property type="taxonomic scope" value="Bacteria"/>
</dbReference>
<dbReference type="HOGENOM" id="CLU_014340_0_5_9"/>
<dbReference type="OrthoDB" id="9802219at2"/>
<dbReference type="UniPathway" id="UPA00189">
    <property type="reaction ID" value="UER00296"/>
</dbReference>
<dbReference type="Proteomes" id="UP000000779">
    <property type="component" value="Chromosome"/>
</dbReference>
<dbReference type="GO" id="GO:0005829">
    <property type="term" value="C:cytosol"/>
    <property type="evidence" value="ECO:0007669"/>
    <property type="project" value="TreeGrafter"/>
</dbReference>
<dbReference type="GO" id="GO:0005524">
    <property type="term" value="F:ATP binding"/>
    <property type="evidence" value="ECO:0007669"/>
    <property type="project" value="UniProtKB-UniRule"/>
</dbReference>
<dbReference type="GO" id="GO:0003921">
    <property type="term" value="F:GMP synthase activity"/>
    <property type="evidence" value="ECO:0007669"/>
    <property type="project" value="InterPro"/>
</dbReference>
<dbReference type="CDD" id="cd01742">
    <property type="entry name" value="GATase1_GMP_Synthase"/>
    <property type="match status" value="1"/>
</dbReference>
<dbReference type="CDD" id="cd01997">
    <property type="entry name" value="GMP_synthase_C"/>
    <property type="match status" value="1"/>
</dbReference>
<dbReference type="FunFam" id="3.30.300.10:FF:000002">
    <property type="entry name" value="GMP synthase [glutamine-hydrolyzing]"/>
    <property type="match status" value="1"/>
</dbReference>
<dbReference type="FunFam" id="3.40.50.620:FF:000001">
    <property type="entry name" value="GMP synthase [glutamine-hydrolyzing]"/>
    <property type="match status" value="1"/>
</dbReference>
<dbReference type="FunFam" id="3.40.50.880:FF:000001">
    <property type="entry name" value="GMP synthase [glutamine-hydrolyzing]"/>
    <property type="match status" value="1"/>
</dbReference>
<dbReference type="Gene3D" id="3.30.300.10">
    <property type="match status" value="1"/>
</dbReference>
<dbReference type="Gene3D" id="3.40.50.880">
    <property type="match status" value="1"/>
</dbReference>
<dbReference type="Gene3D" id="3.40.50.620">
    <property type="entry name" value="HUPs"/>
    <property type="match status" value="1"/>
</dbReference>
<dbReference type="HAMAP" id="MF_00344">
    <property type="entry name" value="GMP_synthase"/>
    <property type="match status" value="1"/>
</dbReference>
<dbReference type="InterPro" id="IPR029062">
    <property type="entry name" value="Class_I_gatase-like"/>
</dbReference>
<dbReference type="InterPro" id="IPR017926">
    <property type="entry name" value="GATASE"/>
</dbReference>
<dbReference type="InterPro" id="IPR001674">
    <property type="entry name" value="GMP_synth_C"/>
</dbReference>
<dbReference type="InterPro" id="IPR004739">
    <property type="entry name" value="GMP_synth_GATase"/>
</dbReference>
<dbReference type="InterPro" id="IPR022955">
    <property type="entry name" value="GMP_synthase"/>
</dbReference>
<dbReference type="InterPro" id="IPR025777">
    <property type="entry name" value="GMPS_ATP_PPase_dom"/>
</dbReference>
<dbReference type="InterPro" id="IPR022310">
    <property type="entry name" value="NAD/GMP_synthase"/>
</dbReference>
<dbReference type="InterPro" id="IPR014729">
    <property type="entry name" value="Rossmann-like_a/b/a_fold"/>
</dbReference>
<dbReference type="NCBIfam" id="TIGR00884">
    <property type="entry name" value="guaA_Cterm"/>
    <property type="match status" value="1"/>
</dbReference>
<dbReference type="NCBIfam" id="TIGR00888">
    <property type="entry name" value="guaA_Nterm"/>
    <property type="match status" value="1"/>
</dbReference>
<dbReference type="NCBIfam" id="NF000848">
    <property type="entry name" value="PRK00074.1"/>
    <property type="match status" value="1"/>
</dbReference>
<dbReference type="PANTHER" id="PTHR11922:SF2">
    <property type="entry name" value="GMP SYNTHASE [GLUTAMINE-HYDROLYZING]"/>
    <property type="match status" value="1"/>
</dbReference>
<dbReference type="PANTHER" id="PTHR11922">
    <property type="entry name" value="GMP SYNTHASE-RELATED"/>
    <property type="match status" value="1"/>
</dbReference>
<dbReference type="Pfam" id="PF00117">
    <property type="entry name" value="GATase"/>
    <property type="match status" value="1"/>
</dbReference>
<dbReference type="Pfam" id="PF00958">
    <property type="entry name" value="GMP_synt_C"/>
    <property type="match status" value="1"/>
</dbReference>
<dbReference type="Pfam" id="PF02540">
    <property type="entry name" value="NAD_synthase"/>
    <property type="match status" value="1"/>
</dbReference>
<dbReference type="PRINTS" id="PR00097">
    <property type="entry name" value="ANTSNTHASEII"/>
</dbReference>
<dbReference type="PRINTS" id="PR00099">
    <property type="entry name" value="CPSGATASE"/>
</dbReference>
<dbReference type="PRINTS" id="PR00096">
    <property type="entry name" value="GATASE"/>
</dbReference>
<dbReference type="SUPFAM" id="SSF52402">
    <property type="entry name" value="Adenine nucleotide alpha hydrolases-like"/>
    <property type="match status" value="1"/>
</dbReference>
<dbReference type="SUPFAM" id="SSF52317">
    <property type="entry name" value="Class I glutamine amidotransferase-like"/>
    <property type="match status" value="1"/>
</dbReference>
<dbReference type="SUPFAM" id="SSF54810">
    <property type="entry name" value="GMP synthetase C-terminal dimerisation domain"/>
    <property type="match status" value="1"/>
</dbReference>
<dbReference type="PROSITE" id="PS51273">
    <property type="entry name" value="GATASE_TYPE_1"/>
    <property type="match status" value="1"/>
</dbReference>
<dbReference type="PROSITE" id="PS51553">
    <property type="entry name" value="GMPS_ATP_PPASE"/>
    <property type="match status" value="1"/>
</dbReference>
<reference key="1">
    <citation type="journal article" date="2006" name="J. Bacteriol.">
        <title>Whole-genome sequence of Listeria welshimeri reveals common steps in genome reduction with Listeria innocua as compared to Listeria monocytogenes.</title>
        <authorList>
            <person name="Hain T."/>
            <person name="Steinweg C."/>
            <person name="Kuenne C.T."/>
            <person name="Billion A."/>
            <person name="Ghai R."/>
            <person name="Chatterjee S.S."/>
            <person name="Domann E."/>
            <person name="Kaerst U."/>
            <person name="Goesmann A."/>
            <person name="Bekel T."/>
            <person name="Bartels D."/>
            <person name="Kaiser O."/>
            <person name="Meyer F."/>
            <person name="Puehler A."/>
            <person name="Weisshaar B."/>
            <person name="Wehland J."/>
            <person name="Liang C."/>
            <person name="Dandekar T."/>
            <person name="Lampidis R."/>
            <person name="Kreft J."/>
            <person name="Goebel W."/>
            <person name="Chakraborty T."/>
        </authorList>
    </citation>
    <scope>NUCLEOTIDE SEQUENCE [LARGE SCALE GENOMIC DNA]</scope>
    <source>
        <strain>ATCC 35897 / DSM 20650 / CCUG 15529 / CIP 8149 / NCTC 11857 / SLCC 5334 / V8</strain>
    </source>
</reference>
<evidence type="ECO:0000255" key="1">
    <source>
        <dbReference type="HAMAP-Rule" id="MF_00344"/>
    </source>
</evidence>
<gene>
    <name evidence="1" type="primary">guaA</name>
    <name type="ordered locus">lwe1071</name>
</gene>
<keyword id="KW-0067">ATP-binding</keyword>
<keyword id="KW-0315">Glutamine amidotransferase</keyword>
<keyword id="KW-0332">GMP biosynthesis</keyword>
<keyword id="KW-0436">Ligase</keyword>
<keyword id="KW-0547">Nucleotide-binding</keyword>
<keyword id="KW-0658">Purine biosynthesis</keyword>
<proteinExistence type="inferred from homology"/>
<organism>
    <name type="scientific">Listeria welshimeri serovar 6b (strain ATCC 35897 / DSM 20650 / CCUG 15529 / CIP 8149 / NCTC 11857 / SLCC 5334 / V8)</name>
    <dbReference type="NCBI Taxonomy" id="386043"/>
    <lineage>
        <taxon>Bacteria</taxon>
        <taxon>Bacillati</taxon>
        <taxon>Bacillota</taxon>
        <taxon>Bacilli</taxon>
        <taxon>Bacillales</taxon>
        <taxon>Listeriaceae</taxon>
        <taxon>Listeria</taxon>
    </lineage>
</organism>
<name>GUAA_LISW6</name>
<protein>
    <recommendedName>
        <fullName evidence="1">GMP synthase [glutamine-hydrolyzing]</fullName>
        <ecNumber evidence="1">6.3.5.2</ecNumber>
    </recommendedName>
    <alternativeName>
        <fullName evidence="1">GMP synthetase</fullName>
    </alternativeName>
    <alternativeName>
        <fullName evidence="1">Glutamine amidotransferase</fullName>
    </alternativeName>
</protein>
<accession>A0AHK7</accession>